<dbReference type="EC" id="6.3.4.16" evidence="2"/>
<dbReference type="EC" id="6.3.5.5" evidence="2"/>
<dbReference type="EMBL" id="U81260">
    <property type="protein sequence ID" value="AAB39256.1"/>
    <property type="molecule type" value="Genomic_DNA"/>
</dbReference>
<dbReference type="EMBL" id="AE006468">
    <property type="protein sequence ID" value="AAL19031.1"/>
    <property type="molecule type" value="Genomic_DNA"/>
</dbReference>
<dbReference type="EMBL" id="M36540">
    <property type="protein sequence ID" value="AAA27033.1"/>
    <property type="molecule type" value="Genomic_DNA"/>
</dbReference>
<dbReference type="RefSeq" id="NP_459072.1">
    <property type="nucleotide sequence ID" value="NC_003197.2"/>
</dbReference>
<dbReference type="RefSeq" id="WP_001126305.1">
    <property type="nucleotide sequence ID" value="NC_003197.2"/>
</dbReference>
<dbReference type="SMR" id="P14846"/>
<dbReference type="STRING" id="99287.STM0067"/>
<dbReference type="PaxDb" id="99287-STM0067"/>
<dbReference type="GeneID" id="1251585"/>
<dbReference type="KEGG" id="stm:STM0067"/>
<dbReference type="PATRIC" id="fig|99287.12.peg.69"/>
<dbReference type="HOGENOM" id="CLU_000513_1_3_6"/>
<dbReference type="OMA" id="FPFNKFP"/>
<dbReference type="PhylomeDB" id="P14846"/>
<dbReference type="BioCyc" id="SENT99287:STM0067-MONOMER"/>
<dbReference type="UniPathway" id="UPA00068">
    <property type="reaction ID" value="UER00171"/>
</dbReference>
<dbReference type="UniPathway" id="UPA00070">
    <property type="reaction ID" value="UER00115"/>
</dbReference>
<dbReference type="Proteomes" id="UP000001014">
    <property type="component" value="Chromosome"/>
</dbReference>
<dbReference type="GO" id="GO:0005737">
    <property type="term" value="C:cytoplasm"/>
    <property type="evidence" value="ECO:0000318"/>
    <property type="project" value="GO_Central"/>
</dbReference>
<dbReference type="GO" id="GO:0005524">
    <property type="term" value="F:ATP binding"/>
    <property type="evidence" value="ECO:0007669"/>
    <property type="project" value="UniProtKB-UniRule"/>
</dbReference>
<dbReference type="GO" id="GO:0004087">
    <property type="term" value="F:carbamoyl-phosphate synthase (ammonia) activity"/>
    <property type="evidence" value="ECO:0007669"/>
    <property type="project" value="RHEA"/>
</dbReference>
<dbReference type="GO" id="GO:0004088">
    <property type="term" value="F:carbamoyl-phosphate synthase (glutamine-hydrolyzing) activity"/>
    <property type="evidence" value="ECO:0007669"/>
    <property type="project" value="UniProtKB-UniRule"/>
</dbReference>
<dbReference type="GO" id="GO:0046872">
    <property type="term" value="F:metal ion binding"/>
    <property type="evidence" value="ECO:0007669"/>
    <property type="project" value="UniProtKB-KW"/>
</dbReference>
<dbReference type="GO" id="GO:0044205">
    <property type="term" value="P:'de novo' UMP biosynthetic process"/>
    <property type="evidence" value="ECO:0007669"/>
    <property type="project" value="UniProtKB-UniRule"/>
</dbReference>
<dbReference type="GO" id="GO:0006541">
    <property type="term" value="P:glutamine metabolic process"/>
    <property type="evidence" value="ECO:0000318"/>
    <property type="project" value="GO_Central"/>
</dbReference>
<dbReference type="GO" id="GO:0006526">
    <property type="term" value="P:L-arginine biosynthetic process"/>
    <property type="evidence" value="ECO:0007669"/>
    <property type="project" value="UniProtKB-UniRule"/>
</dbReference>
<dbReference type="CDD" id="cd01424">
    <property type="entry name" value="MGS_CPS_II"/>
    <property type="match status" value="1"/>
</dbReference>
<dbReference type="FunFam" id="1.10.1030.10:FF:000002">
    <property type="entry name" value="Carbamoyl-phosphate synthase large chain"/>
    <property type="match status" value="1"/>
</dbReference>
<dbReference type="FunFam" id="3.30.1490.20:FF:000001">
    <property type="entry name" value="Carbamoyl-phosphate synthase large chain"/>
    <property type="match status" value="1"/>
</dbReference>
<dbReference type="FunFam" id="3.30.470.20:FF:000007">
    <property type="entry name" value="Carbamoyl-phosphate synthase large chain"/>
    <property type="match status" value="1"/>
</dbReference>
<dbReference type="FunFam" id="3.30.470.20:FF:000013">
    <property type="entry name" value="Carbamoyl-phosphate synthase large chain"/>
    <property type="match status" value="1"/>
</dbReference>
<dbReference type="FunFam" id="3.40.50.1380:FF:000004">
    <property type="entry name" value="Carbamoyl-phosphate synthase large chain"/>
    <property type="match status" value="1"/>
</dbReference>
<dbReference type="FunFam" id="3.40.50.20:FF:000001">
    <property type="entry name" value="Carbamoyl-phosphate synthase large chain"/>
    <property type="match status" value="1"/>
</dbReference>
<dbReference type="FunFam" id="3.40.50.20:FF:000003">
    <property type="entry name" value="Carbamoyl-phosphate synthase large chain"/>
    <property type="match status" value="1"/>
</dbReference>
<dbReference type="Gene3D" id="3.40.50.20">
    <property type="match status" value="2"/>
</dbReference>
<dbReference type="Gene3D" id="3.30.470.20">
    <property type="entry name" value="ATP-grasp fold, B domain"/>
    <property type="match status" value="2"/>
</dbReference>
<dbReference type="Gene3D" id="1.10.1030.10">
    <property type="entry name" value="Carbamoyl-phosphate synthetase, large subunit oligomerisation domain"/>
    <property type="match status" value="1"/>
</dbReference>
<dbReference type="Gene3D" id="3.40.50.1380">
    <property type="entry name" value="Methylglyoxal synthase-like domain"/>
    <property type="match status" value="1"/>
</dbReference>
<dbReference type="HAMAP" id="MF_01210_A">
    <property type="entry name" value="CPSase_L_chain_A"/>
    <property type="match status" value="1"/>
</dbReference>
<dbReference type="HAMAP" id="MF_01210_B">
    <property type="entry name" value="CPSase_L_chain_B"/>
    <property type="match status" value="1"/>
</dbReference>
<dbReference type="InterPro" id="IPR011761">
    <property type="entry name" value="ATP-grasp"/>
</dbReference>
<dbReference type="InterPro" id="IPR006275">
    <property type="entry name" value="CarbamoylP_synth_lsu"/>
</dbReference>
<dbReference type="InterPro" id="IPR005480">
    <property type="entry name" value="CarbamoylP_synth_lsu_oligo"/>
</dbReference>
<dbReference type="InterPro" id="IPR036897">
    <property type="entry name" value="CarbamoylP_synth_lsu_oligo_sf"/>
</dbReference>
<dbReference type="InterPro" id="IPR005479">
    <property type="entry name" value="CbamoylP_synth_lsu-like_ATP-bd"/>
</dbReference>
<dbReference type="InterPro" id="IPR005483">
    <property type="entry name" value="CbamoylP_synth_lsu_CPSase_dom"/>
</dbReference>
<dbReference type="InterPro" id="IPR011607">
    <property type="entry name" value="MGS-like_dom"/>
</dbReference>
<dbReference type="InterPro" id="IPR036914">
    <property type="entry name" value="MGS-like_dom_sf"/>
</dbReference>
<dbReference type="InterPro" id="IPR033937">
    <property type="entry name" value="MGS_CPS_CarB"/>
</dbReference>
<dbReference type="InterPro" id="IPR016185">
    <property type="entry name" value="PreATP-grasp_dom_sf"/>
</dbReference>
<dbReference type="NCBIfam" id="TIGR01369">
    <property type="entry name" value="CPSaseII_lrg"/>
    <property type="match status" value="1"/>
</dbReference>
<dbReference type="NCBIfam" id="NF003671">
    <property type="entry name" value="PRK05294.1"/>
    <property type="match status" value="1"/>
</dbReference>
<dbReference type="NCBIfam" id="NF009455">
    <property type="entry name" value="PRK12815.1"/>
    <property type="match status" value="1"/>
</dbReference>
<dbReference type="PANTHER" id="PTHR11405:SF53">
    <property type="entry name" value="CARBAMOYL-PHOSPHATE SYNTHASE [AMMONIA], MITOCHONDRIAL"/>
    <property type="match status" value="1"/>
</dbReference>
<dbReference type="PANTHER" id="PTHR11405">
    <property type="entry name" value="CARBAMOYLTRANSFERASE FAMILY MEMBER"/>
    <property type="match status" value="1"/>
</dbReference>
<dbReference type="Pfam" id="PF02786">
    <property type="entry name" value="CPSase_L_D2"/>
    <property type="match status" value="2"/>
</dbReference>
<dbReference type="Pfam" id="PF02787">
    <property type="entry name" value="CPSase_L_D3"/>
    <property type="match status" value="1"/>
</dbReference>
<dbReference type="Pfam" id="PF02142">
    <property type="entry name" value="MGS"/>
    <property type="match status" value="1"/>
</dbReference>
<dbReference type="PRINTS" id="PR00098">
    <property type="entry name" value="CPSASE"/>
</dbReference>
<dbReference type="SMART" id="SM01096">
    <property type="entry name" value="CPSase_L_D3"/>
    <property type="match status" value="1"/>
</dbReference>
<dbReference type="SMART" id="SM00851">
    <property type="entry name" value="MGS"/>
    <property type="match status" value="1"/>
</dbReference>
<dbReference type="SUPFAM" id="SSF48108">
    <property type="entry name" value="Carbamoyl phosphate synthetase, large subunit connection domain"/>
    <property type="match status" value="1"/>
</dbReference>
<dbReference type="SUPFAM" id="SSF56059">
    <property type="entry name" value="Glutathione synthetase ATP-binding domain-like"/>
    <property type="match status" value="2"/>
</dbReference>
<dbReference type="SUPFAM" id="SSF52335">
    <property type="entry name" value="Methylglyoxal synthase-like"/>
    <property type="match status" value="1"/>
</dbReference>
<dbReference type="SUPFAM" id="SSF52440">
    <property type="entry name" value="PreATP-grasp domain"/>
    <property type="match status" value="2"/>
</dbReference>
<dbReference type="PROSITE" id="PS50975">
    <property type="entry name" value="ATP_GRASP"/>
    <property type="match status" value="2"/>
</dbReference>
<dbReference type="PROSITE" id="PS00866">
    <property type="entry name" value="CPSASE_1"/>
    <property type="match status" value="2"/>
</dbReference>
<dbReference type="PROSITE" id="PS00867">
    <property type="entry name" value="CPSASE_2"/>
    <property type="match status" value="2"/>
</dbReference>
<dbReference type="PROSITE" id="PS51855">
    <property type="entry name" value="MGS"/>
    <property type="match status" value="1"/>
</dbReference>
<feature type="initiator methionine" description="Removed" evidence="1">
    <location>
        <position position="1"/>
    </location>
</feature>
<feature type="chain" id="PRO_0000145035" description="Carbamoyl phosphate synthase large chain">
    <location>
        <begin position="2"/>
        <end position="1075"/>
    </location>
</feature>
<feature type="domain" description="ATP-grasp 1" evidence="2">
    <location>
        <begin position="133"/>
        <end position="328"/>
    </location>
</feature>
<feature type="domain" description="ATP-grasp 2" evidence="2">
    <location>
        <begin position="679"/>
        <end position="870"/>
    </location>
</feature>
<feature type="domain" description="MGS-like" evidence="2">
    <location>
        <begin position="937"/>
        <end position="1075"/>
    </location>
</feature>
<feature type="region of interest" description="Carboxyphosphate synthetic domain" evidence="2">
    <location>
        <begin position="2"/>
        <end position="403"/>
    </location>
</feature>
<feature type="region of interest" description="Oligomerization domain" evidence="2">
    <location>
        <begin position="404"/>
        <end position="553"/>
    </location>
</feature>
<feature type="region of interest" description="Carbamoyl phosphate synthetic domain" evidence="2">
    <location>
        <begin position="554"/>
        <end position="936"/>
    </location>
</feature>
<feature type="region of interest" description="Allosteric domain" evidence="2">
    <location>
        <begin position="937"/>
        <end position="1075"/>
    </location>
</feature>
<feature type="binding site" evidence="2">
    <location>
        <position position="129"/>
    </location>
    <ligand>
        <name>ATP</name>
        <dbReference type="ChEBI" id="CHEBI:30616"/>
        <label>1</label>
    </ligand>
</feature>
<feature type="binding site" evidence="2">
    <location>
        <position position="169"/>
    </location>
    <ligand>
        <name>ATP</name>
        <dbReference type="ChEBI" id="CHEBI:30616"/>
        <label>1</label>
    </ligand>
</feature>
<feature type="binding site" evidence="2">
    <location>
        <position position="175"/>
    </location>
    <ligand>
        <name>ATP</name>
        <dbReference type="ChEBI" id="CHEBI:30616"/>
        <label>1</label>
    </ligand>
</feature>
<feature type="binding site" evidence="2">
    <location>
        <position position="176"/>
    </location>
    <ligand>
        <name>ATP</name>
        <dbReference type="ChEBI" id="CHEBI:30616"/>
        <label>1</label>
    </ligand>
</feature>
<feature type="binding site" evidence="2">
    <location>
        <position position="208"/>
    </location>
    <ligand>
        <name>ATP</name>
        <dbReference type="ChEBI" id="CHEBI:30616"/>
        <label>1</label>
    </ligand>
</feature>
<feature type="binding site" evidence="2">
    <location>
        <position position="210"/>
    </location>
    <ligand>
        <name>ATP</name>
        <dbReference type="ChEBI" id="CHEBI:30616"/>
        <label>1</label>
    </ligand>
</feature>
<feature type="binding site" evidence="2">
    <location>
        <position position="215"/>
    </location>
    <ligand>
        <name>ATP</name>
        <dbReference type="ChEBI" id="CHEBI:30616"/>
        <label>1</label>
    </ligand>
</feature>
<feature type="binding site" evidence="2">
    <location>
        <position position="241"/>
    </location>
    <ligand>
        <name>ATP</name>
        <dbReference type="ChEBI" id="CHEBI:30616"/>
        <label>1</label>
    </ligand>
</feature>
<feature type="binding site" evidence="2">
    <location>
        <position position="242"/>
    </location>
    <ligand>
        <name>ATP</name>
        <dbReference type="ChEBI" id="CHEBI:30616"/>
        <label>1</label>
    </ligand>
</feature>
<feature type="binding site" evidence="2">
    <location>
        <position position="243"/>
    </location>
    <ligand>
        <name>ATP</name>
        <dbReference type="ChEBI" id="CHEBI:30616"/>
        <label>1</label>
    </ligand>
</feature>
<feature type="binding site" evidence="2">
    <location>
        <position position="285"/>
    </location>
    <ligand>
        <name>ATP</name>
        <dbReference type="ChEBI" id="CHEBI:30616"/>
        <label>1</label>
    </ligand>
</feature>
<feature type="binding site" evidence="2">
    <location>
        <position position="285"/>
    </location>
    <ligand>
        <name>Mg(2+)</name>
        <dbReference type="ChEBI" id="CHEBI:18420"/>
        <label>1</label>
    </ligand>
</feature>
<feature type="binding site" evidence="2">
    <location>
        <position position="285"/>
    </location>
    <ligand>
        <name>Mn(2+)</name>
        <dbReference type="ChEBI" id="CHEBI:29035"/>
        <label>1</label>
    </ligand>
</feature>
<feature type="binding site" evidence="2">
    <location>
        <position position="299"/>
    </location>
    <ligand>
        <name>ATP</name>
        <dbReference type="ChEBI" id="CHEBI:30616"/>
        <label>1</label>
    </ligand>
</feature>
<feature type="binding site" evidence="2">
    <location>
        <position position="299"/>
    </location>
    <ligand>
        <name>Mg(2+)</name>
        <dbReference type="ChEBI" id="CHEBI:18420"/>
        <label>1</label>
    </ligand>
</feature>
<feature type="binding site" evidence="2">
    <location>
        <position position="299"/>
    </location>
    <ligand>
        <name>Mg(2+)</name>
        <dbReference type="ChEBI" id="CHEBI:18420"/>
        <label>2</label>
    </ligand>
</feature>
<feature type="binding site" evidence="2">
    <location>
        <position position="299"/>
    </location>
    <ligand>
        <name>Mn(2+)</name>
        <dbReference type="ChEBI" id="CHEBI:29035"/>
        <label>1</label>
    </ligand>
</feature>
<feature type="binding site" evidence="2">
    <location>
        <position position="299"/>
    </location>
    <ligand>
        <name>Mn(2+)</name>
        <dbReference type="ChEBI" id="CHEBI:29035"/>
        <label>2</label>
    </ligand>
</feature>
<feature type="binding site" evidence="2">
    <location>
        <position position="301"/>
    </location>
    <ligand>
        <name>Mg(2+)</name>
        <dbReference type="ChEBI" id="CHEBI:18420"/>
        <label>2</label>
    </ligand>
</feature>
<feature type="binding site" evidence="2">
    <location>
        <position position="301"/>
    </location>
    <ligand>
        <name>Mn(2+)</name>
        <dbReference type="ChEBI" id="CHEBI:29035"/>
        <label>2</label>
    </ligand>
</feature>
<feature type="binding site" evidence="2">
    <location>
        <position position="715"/>
    </location>
    <ligand>
        <name>ATP</name>
        <dbReference type="ChEBI" id="CHEBI:30616"/>
        <label>2</label>
    </ligand>
</feature>
<feature type="binding site" evidence="2">
    <location>
        <position position="754"/>
    </location>
    <ligand>
        <name>ATP</name>
        <dbReference type="ChEBI" id="CHEBI:30616"/>
        <label>2</label>
    </ligand>
</feature>
<feature type="binding site" evidence="2">
    <location>
        <position position="756"/>
    </location>
    <ligand>
        <name>ATP</name>
        <dbReference type="ChEBI" id="CHEBI:30616"/>
        <label>2</label>
    </ligand>
</feature>
<feature type="binding site" evidence="2">
    <location>
        <position position="761"/>
    </location>
    <ligand>
        <name>ATP</name>
        <dbReference type="ChEBI" id="CHEBI:30616"/>
        <label>2</label>
    </ligand>
</feature>
<feature type="binding site" evidence="2">
    <location>
        <position position="786"/>
    </location>
    <ligand>
        <name>ATP</name>
        <dbReference type="ChEBI" id="CHEBI:30616"/>
        <label>2</label>
    </ligand>
</feature>
<feature type="binding site" evidence="2">
    <location>
        <position position="787"/>
    </location>
    <ligand>
        <name>ATP</name>
        <dbReference type="ChEBI" id="CHEBI:30616"/>
        <label>2</label>
    </ligand>
</feature>
<feature type="binding site" evidence="2">
    <location>
        <position position="788"/>
    </location>
    <ligand>
        <name>ATP</name>
        <dbReference type="ChEBI" id="CHEBI:30616"/>
        <label>2</label>
    </ligand>
</feature>
<feature type="binding site" evidence="2">
    <location>
        <position position="789"/>
    </location>
    <ligand>
        <name>ATP</name>
        <dbReference type="ChEBI" id="CHEBI:30616"/>
        <label>2</label>
    </ligand>
</feature>
<feature type="binding site" evidence="2">
    <location>
        <position position="829"/>
    </location>
    <ligand>
        <name>ATP</name>
        <dbReference type="ChEBI" id="CHEBI:30616"/>
        <label>2</label>
    </ligand>
</feature>
<feature type="binding site" evidence="2">
    <location>
        <position position="829"/>
    </location>
    <ligand>
        <name>Mg(2+)</name>
        <dbReference type="ChEBI" id="CHEBI:18420"/>
        <label>3</label>
    </ligand>
</feature>
<feature type="binding site" evidence="2">
    <location>
        <position position="829"/>
    </location>
    <ligand>
        <name>Mn(2+)</name>
        <dbReference type="ChEBI" id="CHEBI:29035"/>
        <label>3</label>
    </ligand>
</feature>
<feature type="binding site" evidence="2">
    <location>
        <position position="841"/>
    </location>
    <ligand>
        <name>ATP</name>
        <dbReference type="ChEBI" id="CHEBI:30616"/>
        <label>2</label>
    </ligand>
</feature>
<feature type="binding site" evidence="2">
    <location>
        <position position="841"/>
    </location>
    <ligand>
        <name>Mg(2+)</name>
        <dbReference type="ChEBI" id="CHEBI:18420"/>
        <label>3</label>
    </ligand>
</feature>
<feature type="binding site" evidence="2">
    <location>
        <position position="841"/>
    </location>
    <ligand>
        <name>Mg(2+)</name>
        <dbReference type="ChEBI" id="CHEBI:18420"/>
        <label>4</label>
    </ligand>
</feature>
<feature type="binding site" evidence="2">
    <location>
        <position position="841"/>
    </location>
    <ligand>
        <name>Mn(2+)</name>
        <dbReference type="ChEBI" id="CHEBI:29035"/>
        <label>3</label>
    </ligand>
</feature>
<feature type="binding site" evidence="2">
    <location>
        <position position="841"/>
    </location>
    <ligand>
        <name>Mn(2+)</name>
        <dbReference type="ChEBI" id="CHEBI:29035"/>
        <label>4</label>
    </ligand>
</feature>
<feature type="binding site" evidence="2">
    <location>
        <position position="843"/>
    </location>
    <ligand>
        <name>Mg(2+)</name>
        <dbReference type="ChEBI" id="CHEBI:18420"/>
        <label>4</label>
    </ligand>
</feature>
<feature type="binding site" evidence="2">
    <location>
        <position position="843"/>
    </location>
    <ligand>
        <name>Mn(2+)</name>
        <dbReference type="ChEBI" id="CHEBI:29035"/>
        <label>4</label>
    </ligand>
</feature>
<feature type="sequence conflict" description="In Ref. 1; AAB39256." evidence="3" ref="1">
    <original>I</original>
    <variation>G</variation>
    <location>
        <position position="123"/>
    </location>
</feature>
<reference key="1">
    <citation type="submission" date="1996-12" db="EMBL/GenBank/DDBJ databases">
        <authorList>
            <person name="Lu C.D."/>
            <person name="Walthall D.A."/>
            <person name="Abdelal A.T."/>
        </authorList>
    </citation>
    <scope>NUCLEOTIDE SEQUENCE [GENOMIC DNA]</scope>
    <source>
        <strain>LT2</strain>
    </source>
</reference>
<reference key="2">
    <citation type="journal article" date="2001" name="Nature">
        <title>Complete genome sequence of Salmonella enterica serovar Typhimurium LT2.</title>
        <authorList>
            <person name="McClelland M."/>
            <person name="Sanderson K.E."/>
            <person name="Spieth J."/>
            <person name="Clifton S.W."/>
            <person name="Latreille P."/>
            <person name="Courtney L."/>
            <person name="Porwollik S."/>
            <person name="Ali J."/>
            <person name="Dante M."/>
            <person name="Du F."/>
            <person name="Hou S."/>
            <person name="Layman D."/>
            <person name="Leonard S."/>
            <person name="Nguyen C."/>
            <person name="Scott K."/>
            <person name="Holmes A."/>
            <person name="Grewal N."/>
            <person name="Mulvaney E."/>
            <person name="Ryan E."/>
            <person name="Sun H."/>
            <person name="Florea L."/>
            <person name="Miller W."/>
            <person name="Stoneking T."/>
            <person name="Nhan M."/>
            <person name="Waterston R."/>
            <person name="Wilson R.K."/>
        </authorList>
    </citation>
    <scope>NUCLEOTIDE SEQUENCE [LARGE SCALE GENOMIC DNA]</scope>
    <source>
        <strain>LT2 / SGSC1412 / ATCC 700720</strain>
    </source>
</reference>
<reference key="3">
    <citation type="journal article" date="1988" name="Eur. J. Biochem.">
        <title>Nucleotide sequence of the carA gene and regulation of the carAB operon in Salmonella typhimurium.</title>
        <authorList>
            <person name="Kilstrup M."/>
            <person name="Lu C.D."/>
            <person name="Abdelal A."/>
            <person name="Neuhard J."/>
        </authorList>
    </citation>
    <scope>NUCLEOTIDE SEQUENCE [GENOMIC DNA] OF 1-8</scope>
    <source>
        <strain>LT2</strain>
    </source>
</reference>
<gene>
    <name evidence="2" type="primary">carB</name>
    <name type="ordered locus">STM0067</name>
</gene>
<name>CARB_SALTY</name>
<organism>
    <name type="scientific">Salmonella typhimurium (strain LT2 / SGSC1412 / ATCC 700720)</name>
    <dbReference type="NCBI Taxonomy" id="99287"/>
    <lineage>
        <taxon>Bacteria</taxon>
        <taxon>Pseudomonadati</taxon>
        <taxon>Pseudomonadota</taxon>
        <taxon>Gammaproteobacteria</taxon>
        <taxon>Enterobacterales</taxon>
        <taxon>Enterobacteriaceae</taxon>
        <taxon>Salmonella</taxon>
    </lineage>
</organism>
<protein>
    <recommendedName>
        <fullName evidence="2">Carbamoyl phosphate synthase large chain</fullName>
        <ecNumber evidence="2">6.3.4.16</ecNumber>
        <ecNumber evidence="2">6.3.5.5</ecNumber>
    </recommendedName>
    <alternativeName>
        <fullName evidence="2">Carbamoyl phosphate synthetase ammonia chain</fullName>
    </alternativeName>
</protein>
<keyword id="KW-0028">Amino-acid biosynthesis</keyword>
<keyword id="KW-0055">Arginine biosynthesis</keyword>
<keyword id="KW-0067">ATP-binding</keyword>
<keyword id="KW-0436">Ligase</keyword>
<keyword id="KW-0460">Magnesium</keyword>
<keyword id="KW-0464">Manganese</keyword>
<keyword id="KW-0479">Metal-binding</keyword>
<keyword id="KW-0547">Nucleotide-binding</keyword>
<keyword id="KW-0665">Pyrimidine biosynthesis</keyword>
<keyword id="KW-1185">Reference proteome</keyword>
<keyword id="KW-0677">Repeat</keyword>
<proteinExistence type="inferred from homology"/>
<sequence length="1075" mass="118139">MPKRTDIKSILILGAGPIVIGQACEFDYSGAQACKALREEGYRVILVNSNPATIMTDPEMADATYIEPIHWEVVRKIIEKERPDAVLPTMGGQTALNCALELERQGVLEEFGVTMIGATADAIDKAEDRRRFDIAMKKIGLDTARSGIAHTMEEALAVAADVGFPCIIRPSFTMGGTGGGIAYNREEFEEICERGLDLSPTNELLIDESLIGWKEYEMEVVRDKNDNCIIVCSIENFDAMGIHTGDSITVAPAQTLTDKEYQIMRNASMAVLREIGVETGGSNVQFAVNPKNGRLIVIEMNPRVSRSSALASKATGFPIAKVAAKLAVGYTLDELMNDITGGRTPASFEPSIDYVVTKIPRFNFEKFAGANDRLTTQMKSVGEVMAIGRTQQESLQKALRGLEVGATGFDPKVSLDDPEALTKIRRELKDAGADRIWYIADAFRAGLSVDGVFNLTNIDRWFLVQIEELVRLEEKVAEVGITGLNADFLRQLKRKGFADARLAKLAGVREAEIRKLRDQYDLHPVYKRVDTCAAEFATDTAYMYSTYEDECEANPSIDRDKIMVLGGGPNRIGQGIEFDYCCVHASLALREDGYETIMVNCNPETVSTDYDTSDRLYFEPVTLEDVLEIVRIEKPKGVIVQYGGQTPLKLARALEAAGVPVIGTSPDAIDRAEDRERFQHAVDRLKLKQPANATVTAIEQAVEKAKEIGYPLVVRPSYVLGGRAMEIVYDEADLRRYFQTAVSVSNDAPVLLDRFLDDAVEVDVDAICDGEMVLIGGIMEHIEQAGVHSGDSACSLPAYTLSQEIQDVMRQQVQKLAFELQVRGLMNVQFAVKDNEVYLIEVNPRAARTVPFVSKATGVPLAKVAARVMAGKSLTEQGVTQEIIPPYYSVKEVVLPFNKFPGVDPLLGPEMRSTGEVMGVGRTFAEAFAKAQLGSNSTMKKQGRALLSVREGDKERVVDLAAKLLKQGFELDATHGTAIVLGEAGINPRLVNKVHEGRPHIQDRIKNGEYTYIINTTAGRRAIEDSRVIRRSALQYKVHYDTTLNGGFATTMALNADATEKVTSVQEMHAQIKKS</sequence>
<evidence type="ECO:0000250" key="1"/>
<evidence type="ECO:0000255" key="2">
    <source>
        <dbReference type="HAMAP-Rule" id="MF_01210"/>
    </source>
</evidence>
<evidence type="ECO:0000305" key="3"/>
<accession>P14846</accession>
<accession>P96067</accession>
<comment type="function">
    <text evidence="2">Large subunit of the glutamine-dependent carbamoyl phosphate synthetase (CPSase). CPSase catalyzes the formation of carbamoyl phosphate from the ammonia moiety of glutamine, carbonate, and phosphate donated by ATP, constituting the first step of 2 biosynthetic pathways, one leading to arginine and/or urea and the other to pyrimidine nucleotides. The large subunit (synthetase) binds the substrates ammonia (free or transferred from glutamine from the small subunit), hydrogencarbonate and ATP and carries out an ATP-coupled ligase reaction, activating hydrogencarbonate by forming carboxy phosphate which reacts with ammonia to form carbamoyl phosphate.</text>
</comment>
<comment type="catalytic activity">
    <reaction evidence="2">
        <text>hydrogencarbonate + L-glutamine + 2 ATP + H2O = carbamoyl phosphate + L-glutamate + 2 ADP + phosphate + 2 H(+)</text>
        <dbReference type="Rhea" id="RHEA:18633"/>
        <dbReference type="ChEBI" id="CHEBI:15377"/>
        <dbReference type="ChEBI" id="CHEBI:15378"/>
        <dbReference type="ChEBI" id="CHEBI:17544"/>
        <dbReference type="ChEBI" id="CHEBI:29985"/>
        <dbReference type="ChEBI" id="CHEBI:30616"/>
        <dbReference type="ChEBI" id="CHEBI:43474"/>
        <dbReference type="ChEBI" id="CHEBI:58228"/>
        <dbReference type="ChEBI" id="CHEBI:58359"/>
        <dbReference type="ChEBI" id="CHEBI:456216"/>
        <dbReference type="EC" id="6.3.5.5"/>
    </reaction>
</comment>
<comment type="catalytic activity">
    <molecule>Carbamoyl phosphate synthase large chain</molecule>
    <reaction evidence="2">
        <text>hydrogencarbonate + NH4(+) + 2 ATP = carbamoyl phosphate + 2 ADP + phosphate + 2 H(+)</text>
        <dbReference type="Rhea" id="RHEA:18029"/>
        <dbReference type="ChEBI" id="CHEBI:15378"/>
        <dbReference type="ChEBI" id="CHEBI:17544"/>
        <dbReference type="ChEBI" id="CHEBI:28938"/>
        <dbReference type="ChEBI" id="CHEBI:30616"/>
        <dbReference type="ChEBI" id="CHEBI:43474"/>
        <dbReference type="ChEBI" id="CHEBI:58228"/>
        <dbReference type="ChEBI" id="CHEBI:456216"/>
        <dbReference type="EC" id="6.3.4.16"/>
    </reaction>
</comment>
<comment type="cofactor">
    <cofactor evidence="2">
        <name>Mg(2+)</name>
        <dbReference type="ChEBI" id="CHEBI:18420"/>
    </cofactor>
    <cofactor evidence="2">
        <name>Mn(2+)</name>
        <dbReference type="ChEBI" id="CHEBI:29035"/>
    </cofactor>
    <text evidence="2">Binds 4 Mg(2+) or Mn(2+) ions per subunit.</text>
</comment>
<comment type="pathway">
    <text evidence="2">Amino-acid biosynthesis; L-arginine biosynthesis; carbamoyl phosphate from bicarbonate: step 1/1.</text>
</comment>
<comment type="pathway">
    <text evidence="2">Pyrimidine metabolism; UMP biosynthesis via de novo pathway; (S)-dihydroorotate from bicarbonate: step 1/3.</text>
</comment>
<comment type="subunit">
    <text evidence="2">Composed of two chains; the small (or glutamine) chain promotes the hydrolysis of glutamine to ammonia, which is used by the large (or ammonia) chain to synthesize carbamoyl phosphate. Tetramer of heterodimers (alpha,beta)4.</text>
</comment>
<comment type="domain">
    <text evidence="2">The large subunit is composed of 2 ATP-grasp domains that are involved in binding the 2 ATP molecules needed for carbamoyl phosphate synthesis. The N-terminal ATP-grasp domain (referred to as the carboxyphosphate synthetic component) catalyzes the ATP-dependent phosphorylation of hydrogencarbonate to carboxyphosphate and the subsequent nucleophilic attack by ammonia to form a carbamate intermediate. The C-terminal ATP-grasp domain (referred to as the carbamoyl phosphate synthetic component) then catalyzes the phosphorylation of carbamate with the second ATP to form the end product carbamoyl phosphate. The reactive and unstable enzyme intermediates are sequentially channeled from one active site to the next through the interior of the protein over a distance of at least 96 A.</text>
</comment>
<comment type="similarity">
    <text evidence="2 3">Belongs to the CarB family.</text>
</comment>